<accession>A8AXZ5</accession>
<dbReference type="EC" id="1.1.1.25" evidence="1"/>
<dbReference type="EMBL" id="CP000725">
    <property type="protein sequence ID" value="ABV09597.1"/>
    <property type="molecule type" value="Genomic_DNA"/>
</dbReference>
<dbReference type="RefSeq" id="WP_012130462.1">
    <property type="nucleotide sequence ID" value="NC_009785.1"/>
</dbReference>
<dbReference type="SMR" id="A8AXZ5"/>
<dbReference type="STRING" id="467705.SGO_1374"/>
<dbReference type="KEGG" id="sgo:SGO_1374"/>
<dbReference type="eggNOG" id="COG0169">
    <property type="taxonomic scope" value="Bacteria"/>
</dbReference>
<dbReference type="HOGENOM" id="CLU_044063_4_4_9"/>
<dbReference type="UniPathway" id="UPA00053">
    <property type="reaction ID" value="UER00087"/>
</dbReference>
<dbReference type="Proteomes" id="UP000001131">
    <property type="component" value="Chromosome"/>
</dbReference>
<dbReference type="GO" id="GO:0050661">
    <property type="term" value="F:NADP binding"/>
    <property type="evidence" value="ECO:0007669"/>
    <property type="project" value="InterPro"/>
</dbReference>
<dbReference type="GO" id="GO:0004764">
    <property type="term" value="F:shikimate 3-dehydrogenase (NADP+) activity"/>
    <property type="evidence" value="ECO:0007669"/>
    <property type="project" value="UniProtKB-UniRule"/>
</dbReference>
<dbReference type="GO" id="GO:0008652">
    <property type="term" value="P:amino acid biosynthetic process"/>
    <property type="evidence" value="ECO:0007669"/>
    <property type="project" value="UniProtKB-KW"/>
</dbReference>
<dbReference type="GO" id="GO:0009073">
    <property type="term" value="P:aromatic amino acid family biosynthetic process"/>
    <property type="evidence" value="ECO:0007669"/>
    <property type="project" value="UniProtKB-KW"/>
</dbReference>
<dbReference type="GO" id="GO:0009423">
    <property type="term" value="P:chorismate biosynthetic process"/>
    <property type="evidence" value="ECO:0007669"/>
    <property type="project" value="UniProtKB-UniRule"/>
</dbReference>
<dbReference type="GO" id="GO:0019632">
    <property type="term" value="P:shikimate metabolic process"/>
    <property type="evidence" value="ECO:0007669"/>
    <property type="project" value="InterPro"/>
</dbReference>
<dbReference type="CDD" id="cd01065">
    <property type="entry name" value="NAD_bind_Shikimate_DH"/>
    <property type="match status" value="1"/>
</dbReference>
<dbReference type="Gene3D" id="3.40.50.10860">
    <property type="entry name" value="Leucine Dehydrogenase, chain A, domain 1"/>
    <property type="match status" value="1"/>
</dbReference>
<dbReference type="Gene3D" id="3.40.50.720">
    <property type="entry name" value="NAD(P)-binding Rossmann-like Domain"/>
    <property type="match status" value="1"/>
</dbReference>
<dbReference type="HAMAP" id="MF_00222">
    <property type="entry name" value="Shikimate_DH_AroE"/>
    <property type="match status" value="1"/>
</dbReference>
<dbReference type="InterPro" id="IPR046346">
    <property type="entry name" value="Aminoacid_DH-like_N_sf"/>
</dbReference>
<dbReference type="InterPro" id="IPR036291">
    <property type="entry name" value="NAD(P)-bd_dom_sf"/>
</dbReference>
<dbReference type="InterPro" id="IPR041121">
    <property type="entry name" value="SDH_C"/>
</dbReference>
<dbReference type="InterPro" id="IPR011342">
    <property type="entry name" value="Shikimate_DH"/>
</dbReference>
<dbReference type="InterPro" id="IPR013708">
    <property type="entry name" value="Shikimate_DH-bd_N"/>
</dbReference>
<dbReference type="InterPro" id="IPR022893">
    <property type="entry name" value="Shikimate_DH_fam"/>
</dbReference>
<dbReference type="NCBIfam" id="TIGR00507">
    <property type="entry name" value="aroE"/>
    <property type="match status" value="1"/>
</dbReference>
<dbReference type="NCBIfam" id="NF001315">
    <property type="entry name" value="PRK00258.2-4"/>
    <property type="match status" value="1"/>
</dbReference>
<dbReference type="PANTHER" id="PTHR21089:SF1">
    <property type="entry name" value="BIFUNCTIONAL 3-DEHYDROQUINATE DEHYDRATASE_SHIKIMATE DEHYDROGENASE, CHLOROPLASTIC"/>
    <property type="match status" value="1"/>
</dbReference>
<dbReference type="PANTHER" id="PTHR21089">
    <property type="entry name" value="SHIKIMATE DEHYDROGENASE"/>
    <property type="match status" value="1"/>
</dbReference>
<dbReference type="Pfam" id="PF18317">
    <property type="entry name" value="SDH_C"/>
    <property type="match status" value="1"/>
</dbReference>
<dbReference type="Pfam" id="PF08501">
    <property type="entry name" value="Shikimate_dh_N"/>
    <property type="match status" value="1"/>
</dbReference>
<dbReference type="SUPFAM" id="SSF53223">
    <property type="entry name" value="Aminoacid dehydrogenase-like, N-terminal domain"/>
    <property type="match status" value="1"/>
</dbReference>
<dbReference type="SUPFAM" id="SSF51735">
    <property type="entry name" value="NAD(P)-binding Rossmann-fold domains"/>
    <property type="match status" value="1"/>
</dbReference>
<evidence type="ECO:0000255" key="1">
    <source>
        <dbReference type="HAMAP-Rule" id="MF_00222"/>
    </source>
</evidence>
<protein>
    <recommendedName>
        <fullName evidence="1">Shikimate dehydrogenase (NADP(+))</fullName>
        <shortName evidence="1">SDH</shortName>
        <ecNumber evidence="1">1.1.1.25</ecNumber>
    </recommendedName>
</protein>
<comment type="function">
    <text evidence="1">Involved in the biosynthesis of the chorismate, which leads to the biosynthesis of aromatic amino acids. Catalyzes the reversible NADPH linked reduction of 3-dehydroshikimate (DHSA) to yield shikimate (SA).</text>
</comment>
<comment type="catalytic activity">
    <reaction evidence="1">
        <text>shikimate + NADP(+) = 3-dehydroshikimate + NADPH + H(+)</text>
        <dbReference type="Rhea" id="RHEA:17737"/>
        <dbReference type="ChEBI" id="CHEBI:15378"/>
        <dbReference type="ChEBI" id="CHEBI:16630"/>
        <dbReference type="ChEBI" id="CHEBI:36208"/>
        <dbReference type="ChEBI" id="CHEBI:57783"/>
        <dbReference type="ChEBI" id="CHEBI:58349"/>
        <dbReference type="EC" id="1.1.1.25"/>
    </reaction>
</comment>
<comment type="pathway">
    <text evidence="1">Metabolic intermediate biosynthesis; chorismate biosynthesis; chorismate from D-erythrose 4-phosphate and phosphoenolpyruvate: step 4/7.</text>
</comment>
<comment type="subunit">
    <text evidence="1">Homodimer.</text>
</comment>
<comment type="similarity">
    <text evidence="1">Belongs to the shikimate dehydrogenase family.</text>
</comment>
<proteinExistence type="inferred from homology"/>
<keyword id="KW-0028">Amino-acid biosynthesis</keyword>
<keyword id="KW-0057">Aromatic amino acid biosynthesis</keyword>
<keyword id="KW-0521">NADP</keyword>
<keyword id="KW-0560">Oxidoreductase</keyword>
<keyword id="KW-1185">Reference proteome</keyword>
<reference key="1">
    <citation type="journal article" date="2007" name="J. Bacteriol.">
        <title>Genome-wide transcriptional changes in Streptococcus gordonii in response to competence signaling peptide.</title>
        <authorList>
            <person name="Vickerman M.M."/>
            <person name="Iobst S."/>
            <person name="Jesionowski A.M."/>
            <person name="Gill S.R."/>
        </authorList>
    </citation>
    <scope>NUCLEOTIDE SEQUENCE [LARGE SCALE GENOMIC DNA]</scope>
    <source>
        <strain>Challis / ATCC 35105 / BCRC 15272 / CH1 / DL1 / V288</strain>
    </source>
</reference>
<name>AROE_STRGC</name>
<feature type="chain" id="PRO_1000078132" description="Shikimate dehydrogenase (NADP(+))">
    <location>
        <begin position="1"/>
        <end position="285"/>
    </location>
</feature>
<feature type="active site" description="Proton acceptor" evidence="1">
    <location>
        <position position="71"/>
    </location>
</feature>
<feature type="binding site" evidence="1">
    <location>
        <begin position="20"/>
        <end position="22"/>
    </location>
    <ligand>
        <name>shikimate</name>
        <dbReference type="ChEBI" id="CHEBI:36208"/>
    </ligand>
</feature>
<feature type="binding site" evidence="1">
    <location>
        <position position="67"/>
    </location>
    <ligand>
        <name>shikimate</name>
        <dbReference type="ChEBI" id="CHEBI:36208"/>
    </ligand>
</feature>
<feature type="binding site" evidence="1">
    <location>
        <position position="83"/>
    </location>
    <ligand>
        <name>NADP(+)</name>
        <dbReference type="ChEBI" id="CHEBI:58349"/>
    </ligand>
</feature>
<feature type="binding site" evidence="1">
    <location>
        <position position="92"/>
    </location>
    <ligand>
        <name>shikimate</name>
        <dbReference type="ChEBI" id="CHEBI:36208"/>
    </ligand>
</feature>
<feature type="binding site" evidence="1">
    <location>
        <position position="107"/>
    </location>
    <ligand>
        <name>shikimate</name>
        <dbReference type="ChEBI" id="CHEBI:36208"/>
    </ligand>
</feature>
<feature type="binding site" evidence="1">
    <location>
        <begin position="129"/>
        <end position="133"/>
    </location>
    <ligand>
        <name>NADP(+)</name>
        <dbReference type="ChEBI" id="CHEBI:58349"/>
    </ligand>
</feature>
<feature type="binding site" evidence="1">
    <location>
        <position position="227"/>
    </location>
    <ligand>
        <name>NADP(+)</name>
        <dbReference type="ChEBI" id="CHEBI:58349"/>
    </ligand>
</feature>
<feature type="binding site" evidence="1">
    <location>
        <position position="229"/>
    </location>
    <ligand>
        <name>shikimate</name>
        <dbReference type="ChEBI" id="CHEBI:36208"/>
    </ligand>
</feature>
<feature type="binding site" evidence="1">
    <location>
        <position position="250"/>
    </location>
    <ligand>
        <name>NADP(+)</name>
        <dbReference type="ChEBI" id="CHEBI:58349"/>
    </ligand>
</feature>
<gene>
    <name evidence="1" type="primary">aroE</name>
    <name type="ordered locus">SGO_1374</name>
</gene>
<sequence length="285" mass="31290">MKIDGHTRLAAVIAKPIKHSISPFIHNMAYDLTDTNAVYLAFEVDRENLEQAVENIRLHQMLGANISMPYKQEVITYLDELDESALLIGAVNTVVNQNDRLIGYNTDGLGFFRSLSNFHIKGKNLTILGAGGAASAIIGQAMLDGVEKVCVFDLRDRLAGHQERMGQMSQRLGHPIQLLAVEDLAALSDAVNQSDLFINATGLGMDGKSLPIPSDFTFPKGLLVADMTYCPAETPFLRLAREQGLQTVNGLGMLLYQAEKAFELMTGKKMPSEEIKKALIEKLEI</sequence>
<organism>
    <name type="scientific">Streptococcus gordonii (strain Challis / ATCC 35105 / BCRC 15272 / CH1 / DL1 / V288)</name>
    <dbReference type="NCBI Taxonomy" id="467705"/>
    <lineage>
        <taxon>Bacteria</taxon>
        <taxon>Bacillati</taxon>
        <taxon>Bacillota</taxon>
        <taxon>Bacilli</taxon>
        <taxon>Lactobacillales</taxon>
        <taxon>Streptococcaceae</taxon>
        <taxon>Streptococcus</taxon>
    </lineage>
</organism>